<dbReference type="EC" id="7.1.1.9"/>
<dbReference type="EMBL" id="Y16067">
    <property type="protein sequence ID" value="CAA76022.1"/>
    <property type="molecule type" value="Genomic_DNA"/>
</dbReference>
<dbReference type="PIR" id="T11303">
    <property type="entry name" value="T11303"/>
</dbReference>
<dbReference type="SMR" id="O79404"/>
<dbReference type="CTD" id="4513"/>
<dbReference type="OrthoDB" id="539285at2759"/>
<dbReference type="GO" id="GO:0005743">
    <property type="term" value="C:mitochondrial inner membrane"/>
    <property type="evidence" value="ECO:0007669"/>
    <property type="project" value="UniProtKB-SubCell"/>
</dbReference>
<dbReference type="GO" id="GO:0045277">
    <property type="term" value="C:respiratory chain complex IV"/>
    <property type="evidence" value="ECO:0000250"/>
    <property type="project" value="UniProtKB"/>
</dbReference>
<dbReference type="GO" id="GO:0005507">
    <property type="term" value="F:copper ion binding"/>
    <property type="evidence" value="ECO:0007669"/>
    <property type="project" value="InterPro"/>
</dbReference>
<dbReference type="GO" id="GO:0004129">
    <property type="term" value="F:cytochrome-c oxidase activity"/>
    <property type="evidence" value="ECO:0007669"/>
    <property type="project" value="UniProtKB-EC"/>
</dbReference>
<dbReference type="GO" id="GO:0042773">
    <property type="term" value="P:ATP synthesis coupled electron transport"/>
    <property type="evidence" value="ECO:0007669"/>
    <property type="project" value="TreeGrafter"/>
</dbReference>
<dbReference type="CDD" id="cd13912">
    <property type="entry name" value="CcO_II_C"/>
    <property type="match status" value="1"/>
</dbReference>
<dbReference type="FunFam" id="1.10.287.90:FF:000001">
    <property type="entry name" value="Cytochrome c oxidase subunit 2"/>
    <property type="match status" value="1"/>
</dbReference>
<dbReference type="FunFam" id="2.60.40.420:FF:000001">
    <property type="entry name" value="Cytochrome c oxidase subunit 2"/>
    <property type="match status" value="1"/>
</dbReference>
<dbReference type="Gene3D" id="1.10.287.90">
    <property type="match status" value="1"/>
</dbReference>
<dbReference type="Gene3D" id="2.60.40.420">
    <property type="entry name" value="Cupredoxins - blue copper proteins"/>
    <property type="match status" value="1"/>
</dbReference>
<dbReference type="InterPro" id="IPR045187">
    <property type="entry name" value="CcO_II"/>
</dbReference>
<dbReference type="InterPro" id="IPR002429">
    <property type="entry name" value="CcO_II-like_C"/>
</dbReference>
<dbReference type="InterPro" id="IPR034210">
    <property type="entry name" value="CcO_II_C"/>
</dbReference>
<dbReference type="InterPro" id="IPR001505">
    <property type="entry name" value="Copper_CuA"/>
</dbReference>
<dbReference type="InterPro" id="IPR008972">
    <property type="entry name" value="Cupredoxin"/>
</dbReference>
<dbReference type="InterPro" id="IPR014222">
    <property type="entry name" value="Cyt_c_oxidase_su2"/>
</dbReference>
<dbReference type="InterPro" id="IPR011759">
    <property type="entry name" value="Cyt_c_oxidase_su2_TM_dom"/>
</dbReference>
<dbReference type="InterPro" id="IPR036257">
    <property type="entry name" value="Cyt_c_oxidase_su2_TM_sf"/>
</dbReference>
<dbReference type="NCBIfam" id="TIGR02866">
    <property type="entry name" value="CoxB"/>
    <property type="match status" value="1"/>
</dbReference>
<dbReference type="PANTHER" id="PTHR22888:SF9">
    <property type="entry name" value="CYTOCHROME C OXIDASE SUBUNIT 2"/>
    <property type="match status" value="1"/>
</dbReference>
<dbReference type="PANTHER" id="PTHR22888">
    <property type="entry name" value="CYTOCHROME C OXIDASE, SUBUNIT II"/>
    <property type="match status" value="1"/>
</dbReference>
<dbReference type="Pfam" id="PF00116">
    <property type="entry name" value="COX2"/>
    <property type="match status" value="1"/>
</dbReference>
<dbReference type="Pfam" id="PF02790">
    <property type="entry name" value="COX2_TM"/>
    <property type="match status" value="1"/>
</dbReference>
<dbReference type="PRINTS" id="PR01166">
    <property type="entry name" value="CYCOXIDASEII"/>
</dbReference>
<dbReference type="SUPFAM" id="SSF49503">
    <property type="entry name" value="Cupredoxins"/>
    <property type="match status" value="1"/>
</dbReference>
<dbReference type="SUPFAM" id="SSF81464">
    <property type="entry name" value="Cytochrome c oxidase subunit II-like, transmembrane region"/>
    <property type="match status" value="1"/>
</dbReference>
<dbReference type="PROSITE" id="PS00078">
    <property type="entry name" value="COX2"/>
    <property type="match status" value="1"/>
</dbReference>
<dbReference type="PROSITE" id="PS50857">
    <property type="entry name" value="COX2_CUA"/>
    <property type="match status" value="1"/>
</dbReference>
<dbReference type="PROSITE" id="PS50999">
    <property type="entry name" value="COX2_TM"/>
    <property type="match status" value="1"/>
</dbReference>
<sequence>MAHPSQLGFQDAASPVMEELIHFHDHTLMIVFLISTLVLYIITAMVSTKLTNKYILDSQEIEIVWTILPAIILIMIALPSLRILYLMDEINDPHLTIKAMGHQWYWSYEYTDYEDLGFDSYMIQTQDLTPGQFRLLETDHRMVVPMESPIRVLVSAEDVLHAWAVPALGVKMDAVPGRLNQTAFIISRPGVYYGQCSEICGANHSFMPIVVEAVPLEHFETWSSLMLEEA</sequence>
<comment type="function">
    <text evidence="2">Component of the cytochrome c oxidase, the last enzyme in the mitochondrial electron transport chain which drives oxidative phosphorylation. The respiratory chain contains 3 multisubunit complexes succinate dehydrogenase (complex II, CII), ubiquinol-cytochrome c oxidoreductase (cytochrome b-c1 complex, complex III, CIII) and cytochrome c oxidase (complex IV, CIV), that cooperate to transfer electrons derived from NADH and succinate to molecular oxygen, creating an electrochemical gradient over the inner membrane that drives transmembrane transport and the ATP synthase. Cytochrome c oxidase is the component of the respiratory chain that catalyzes the reduction of oxygen to water. Electrons originating from reduced cytochrome c in the intermembrane space (IMS) are transferred via the dinuclear copper A center (CU(A)) of subunit 2 and heme A of subunit 1 to the active site in subunit 1, a binuclear center (BNC) formed by heme A3 and copper B (CU(B)). The BNC reduces molecular oxygen to 2 water molecules using 4 electrons from cytochrome c in the IMS and 4 protons from the mitochondrial matrix.</text>
</comment>
<comment type="catalytic activity">
    <reaction evidence="2">
        <text>4 Fe(II)-[cytochrome c] + O2 + 8 H(+)(in) = 4 Fe(III)-[cytochrome c] + 2 H2O + 4 H(+)(out)</text>
        <dbReference type="Rhea" id="RHEA:11436"/>
        <dbReference type="Rhea" id="RHEA-COMP:10350"/>
        <dbReference type="Rhea" id="RHEA-COMP:14399"/>
        <dbReference type="ChEBI" id="CHEBI:15377"/>
        <dbReference type="ChEBI" id="CHEBI:15378"/>
        <dbReference type="ChEBI" id="CHEBI:15379"/>
        <dbReference type="ChEBI" id="CHEBI:29033"/>
        <dbReference type="ChEBI" id="CHEBI:29034"/>
        <dbReference type="EC" id="7.1.1.9"/>
    </reaction>
    <physiologicalReaction direction="left-to-right" evidence="2">
        <dbReference type="Rhea" id="RHEA:11437"/>
    </physiologicalReaction>
</comment>
<comment type="cofactor">
    <cofactor evidence="3">
        <name>Cu cation</name>
        <dbReference type="ChEBI" id="CHEBI:23378"/>
    </cofactor>
    <text evidence="3">Binds a dinuclear copper A center per subunit.</text>
</comment>
<comment type="subunit">
    <text evidence="1 3">Component of the cytochrome c oxidase (complex IV, CIV), a multisubunit enzyme composed of 14 subunits. The complex is composed of a catalytic core of 3 subunits MT-CO1, MT-CO2 and MT-CO3, encoded in the mitochondrial DNA, and 11 supernumerary subunits COX4I, COX5A, COX5B, COX6A, COX6B, COX6C, COX7A, COX7B, COX7C, COX8 and NDUFA4, which are encoded in the nuclear genome. The complex exists as a monomer or a dimer and forms supercomplexes (SCs) in the inner mitochondrial membrane with NADH-ubiquinone oxidoreductase (complex I, CI) and ubiquinol-cytochrome c oxidoreductase (cytochrome b-c1 complex, complex III, CIII), resulting in different assemblies (supercomplex SCI(1)III(2)IV(1) and megacomplex MCI(2)III(2)IV(2)) (By similarity). Found in a complex with TMEM177, COA6, COX18, COX20, SCO1 and SCO2. Interacts with TMEM177 in a COX20-dependent manner. Interacts with COX20. Interacts with COX16 (By similarity).</text>
</comment>
<comment type="subcellular location">
    <subcellularLocation>
        <location evidence="3">Mitochondrion inner membrane</location>
        <topology evidence="3">Multi-pass membrane protein</topology>
    </subcellularLocation>
</comment>
<comment type="similarity">
    <text evidence="4">Belongs to the cytochrome c oxidase subunit 2 family.</text>
</comment>
<geneLocation type="mitochondrion"/>
<accession>O79404</accession>
<proteinExistence type="inferred from homology"/>
<organism>
    <name type="scientific">Scyliorhinus canicula</name>
    <name type="common">Small-spotted catshark</name>
    <name type="synonym">Squalus canicula</name>
    <dbReference type="NCBI Taxonomy" id="7830"/>
    <lineage>
        <taxon>Eukaryota</taxon>
        <taxon>Metazoa</taxon>
        <taxon>Chordata</taxon>
        <taxon>Craniata</taxon>
        <taxon>Vertebrata</taxon>
        <taxon>Chondrichthyes</taxon>
        <taxon>Elasmobranchii</taxon>
        <taxon>Galeomorphii</taxon>
        <taxon>Galeoidea</taxon>
        <taxon>Carcharhiniformes</taxon>
        <taxon>Scyliorhinidae</taxon>
        <taxon>Scyliorhinus</taxon>
    </lineage>
</organism>
<keyword id="KW-0186">Copper</keyword>
<keyword id="KW-0249">Electron transport</keyword>
<keyword id="KW-0460">Magnesium</keyword>
<keyword id="KW-0472">Membrane</keyword>
<keyword id="KW-0479">Metal-binding</keyword>
<keyword id="KW-0496">Mitochondrion</keyword>
<keyword id="KW-0999">Mitochondrion inner membrane</keyword>
<keyword id="KW-0679">Respiratory chain</keyword>
<keyword id="KW-1278">Translocase</keyword>
<keyword id="KW-0812">Transmembrane</keyword>
<keyword id="KW-1133">Transmembrane helix</keyword>
<keyword id="KW-0813">Transport</keyword>
<feature type="chain" id="PRO_0000183688" description="Cytochrome c oxidase subunit 2">
    <location>
        <begin position="1"/>
        <end position="230"/>
    </location>
</feature>
<feature type="topological domain" description="Mitochondrial intermembrane" evidence="3">
    <location>
        <begin position="1"/>
        <end position="14"/>
    </location>
</feature>
<feature type="transmembrane region" description="Helical; Name=I" evidence="3">
    <location>
        <begin position="15"/>
        <end position="45"/>
    </location>
</feature>
<feature type="topological domain" description="Mitochondrial matrix" evidence="3">
    <location>
        <begin position="46"/>
        <end position="59"/>
    </location>
</feature>
<feature type="transmembrane region" description="Helical; Name=II" evidence="3">
    <location>
        <begin position="60"/>
        <end position="87"/>
    </location>
</feature>
<feature type="topological domain" description="Mitochondrial intermembrane" evidence="3">
    <location>
        <begin position="88"/>
        <end position="230"/>
    </location>
</feature>
<feature type="binding site" evidence="3">
    <location>
        <position position="161"/>
    </location>
    <ligand>
        <name>Cu cation</name>
        <dbReference type="ChEBI" id="CHEBI:23378"/>
        <label>A1</label>
    </ligand>
</feature>
<feature type="binding site" evidence="3">
    <location>
        <position position="196"/>
    </location>
    <ligand>
        <name>Cu cation</name>
        <dbReference type="ChEBI" id="CHEBI:23378"/>
        <label>A1</label>
    </ligand>
</feature>
<feature type="binding site" evidence="3">
    <location>
        <position position="196"/>
    </location>
    <ligand>
        <name>Cu cation</name>
        <dbReference type="ChEBI" id="CHEBI:23378"/>
        <label>A2</label>
    </ligand>
</feature>
<feature type="binding site" evidence="3">
    <location>
        <position position="198"/>
    </location>
    <ligand>
        <name>Cu cation</name>
        <dbReference type="ChEBI" id="CHEBI:23378"/>
        <label>A2</label>
    </ligand>
</feature>
<feature type="binding site" evidence="3">
    <location>
        <position position="198"/>
    </location>
    <ligand>
        <name>Mg(2+)</name>
        <dbReference type="ChEBI" id="CHEBI:18420"/>
        <note>ligand shared with MT-CO1</note>
    </ligand>
</feature>
<feature type="binding site" evidence="3">
    <location>
        <position position="200"/>
    </location>
    <ligand>
        <name>Cu cation</name>
        <dbReference type="ChEBI" id="CHEBI:23378"/>
        <label>A1</label>
    </ligand>
</feature>
<feature type="binding site" evidence="3">
    <location>
        <position position="200"/>
    </location>
    <ligand>
        <name>Cu cation</name>
        <dbReference type="ChEBI" id="CHEBI:23378"/>
        <label>A2</label>
    </ligand>
</feature>
<feature type="binding site" evidence="3">
    <location>
        <position position="204"/>
    </location>
    <ligand>
        <name>Cu cation</name>
        <dbReference type="ChEBI" id="CHEBI:23378"/>
        <label>A2</label>
    </ligand>
</feature>
<feature type="binding site" evidence="3">
    <location>
        <position position="207"/>
    </location>
    <ligand>
        <name>Cu cation</name>
        <dbReference type="ChEBI" id="CHEBI:23378"/>
        <label>A1</label>
    </ligand>
</feature>
<name>COX2_SCYCA</name>
<protein>
    <recommendedName>
        <fullName>Cytochrome c oxidase subunit 2</fullName>
        <ecNumber>7.1.1.9</ecNumber>
    </recommendedName>
    <alternativeName>
        <fullName>Cytochrome c oxidase polypeptide II</fullName>
    </alternativeName>
</protein>
<gene>
    <name type="primary">MT-CO2</name>
    <name type="synonym">COII</name>
    <name type="synonym">COXII</name>
    <name type="synonym">MTCO2</name>
</gene>
<reference key="1">
    <citation type="journal article" date="1998" name="Genetics">
        <title>The complete nucleotide sequence of the mitochondrial DNA of the dogfish, Scyliorhinus canicula.</title>
        <authorList>
            <person name="Delarbre C."/>
            <person name="Spruyt N."/>
            <person name="Delmarre C."/>
            <person name="Gallut C."/>
            <person name="Barriel V."/>
            <person name="Janvier P."/>
            <person name="Laudet V."/>
            <person name="Gachelin G."/>
        </authorList>
    </citation>
    <scope>NUCLEOTIDE SEQUENCE [GENOMIC DNA]</scope>
    <source>
        <tissue>Muscle</tissue>
    </source>
</reference>
<evidence type="ECO:0000250" key="1">
    <source>
        <dbReference type="UniProtKB" id="P00403"/>
    </source>
</evidence>
<evidence type="ECO:0000250" key="2">
    <source>
        <dbReference type="UniProtKB" id="P00410"/>
    </source>
</evidence>
<evidence type="ECO:0000250" key="3">
    <source>
        <dbReference type="UniProtKB" id="P68530"/>
    </source>
</evidence>
<evidence type="ECO:0000305" key="4"/>